<feature type="chain" id="PRO_1000001923" description="Glutamate--tRNA ligase">
    <location>
        <begin position="1"/>
        <end position="490"/>
    </location>
</feature>
<feature type="short sequence motif" description="'HIGH' region" evidence="1">
    <location>
        <begin position="13"/>
        <end position="23"/>
    </location>
</feature>
<feature type="short sequence motif" description="'KMSKS' region" evidence="1">
    <location>
        <begin position="257"/>
        <end position="261"/>
    </location>
</feature>
<feature type="binding site" evidence="1">
    <location>
        <position position="260"/>
    </location>
    <ligand>
        <name>ATP</name>
        <dbReference type="ChEBI" id="CHEBI:30616"/>
    </ligand>
</feature>
<gene>
    <name evidence="1" type="primary">gltX</name>
    <name type="ordered locus">BCG_3013c</name>
</gene>
<sequence length="490" mass="53836">MTATETVRVRFCPSPTGTPHVGLVRTALFNWAYARHTGGTFVFRIEDTDAQRDSEESYLALLDALRWLGLDWDEGPEVGGPYGPYRQSQRAEIYRDVLARLLAAGEAYHAFSTPEEVEARHVAAGRNPKLGYDNFDRHLTDAQRAAYLAEGRQPVVRLRMPDDDLAWNDLVRGPVTFAAGSVPDFALTRASGDPLYTLVNPCDDALMKITHVLRGEDLLPSTPRQLALHQALIRIGVAERIPKFAHLPTVLGEGTKKLSKRDPQSNLFAHRDRGFIPEGLLNYLALLGWSIADDHDLFGLDEMVAAFDVADVNSSPARFDQKKADALNAEHIRMLDVGDFTVRLRDHLDTHGHHIALDEAAFAAAAELVQTRIVVLGDAWELLKFFNDDQYVIDPKAAAKELGPDGAAVLDAALAALTSATDWTAPLIEAALKDALIEGLALKPRKAFSPIRVAATGTTVSPPLFESLELLGRDRSMQRLRAARQLVGHA</sequence>
<protein>
    <recommendedName>
        <fullName evidence="1">Glutamate--tRNA ligase</fullName>
        <ecNumber evidence="1">6.1.1.17</ecNumber>
    </recommendedName>
    <alternativeName>
        <fullName evidence="1">Glutamyl-tRNA synthetase</fullName>
        <shortName evidence="1">GluRS</shortName>
    </alternativeName>
</protein>
<evidence type="ECO:0000255" key="1">
    <source>
        <dbReference type="HAMAP-Rule" id="MF_00022"/>
    </source>
</evidence>
<comment type="function">
    <text evidence="1">Catalyzes the attachment of glutamate to tRNA(Glu) in a two-step reaction: glutamate is first activated by ATP to form Glu-AMP and then transferred to the acceptor end of tRNA(Glu).</text>
</comment>
<comment type="catalytic activity">
    <reaction evidence="1">
        <text>tRNA(Glu) + L-glutamate + ATP = L-glutamyl-tRNA(Glu) + AMP + diphosphate</text>
        <dbReference type="Rhea" id="RHEA:23540"/>
        <dbReference type="Rhea" id="RHEA-COMP:9663"/>
        <dbReference type="Rhea" id="RHEA-COMP:9680"/>
        <dbReference type="ChEBI" id="CHEBI:29985"/>
        <dbReference type="ChEBI" id="CHEBI:30616"/>
        <dbReference type="ChEBI" id="CHEBI:33019"/>
        <dbReference type="ChEBI" id="CHEBI:78442"/>
        <dbReference type="ChEBI" id="CHEBI:78520"/>
        <dbReference type="ChEBI" id="CHEBI:456215"/>
        <dbReference type="EC" id="6.1.1.17"/>
    </reaction>
</comment>
<comment type="subunit">
    <text evidence="1">Monomer.</text>
</comment>
<comment type="subcellular location">
    <subcellularLocation>
        <location evidence="1">Cytoplasm</location>
    </subcellularLocation>
</comment>
<comment type="similarity">
    <text evidence="1">Belongs to the class-I aminoacyl-tRNA synthetase family. Glutamate--tRNA ligase type 1 subfamily.</text>
</comment>
<reference key="1">
    <citation type="journal article" date="2007" name="Proc. Natl. Acad. Sci. U.S.A.">
        <title>Genome plasticity of BCG and impact on vaccine efficacy.</title>
        <authorList>
            <person name="Brosch R."/>
            <person name="Gordon S.V."/>
            <person name="Garnier T."/>
            <person name="Eiglmeier K."/>
            <person name="Frigui W."/>
            <person name="Valenti P."/>
            <person name="Dos Santos S."/>
            <person name="Duthoy S."/>
            <person name="Lacroix C."/>
            <person name="Garcia-Pelayo C."/>
            <person name="Inwald J.K."/>
            <person name="Golby P."/>
            <person name="Garcia J.N."/>
            <person name="Hewinson R.G."/>
            <person name="Behr M.A."/>
            <person name="Quail M.A."/>
            <person name="Churcher C."/>
            <person name="Barrell B.G."/>
            <person name="Parkhill J."/>
            <person name="Cole S.T."/>
        </authorList>
    </citation>
    <scope>NUCLEOTIDE SEQUENCE [LARGE SCALE GENOMIC DNA]</scope>
    <source>
        <strain>BCG / Pasteur 1173P2</strain>
    </source>
</reference>
<organism>
    <name type="scientific">Mycobacterium bovis (strain BCG / Pasteur 1173P2)</name>
    <dbReference type="NCBI Taxonomy" id="410289"/>
    <lineage>
        <taxon>Bacteria</taxon>
        <taxon>Bacillati</taxon>
        <taxon>Actinomycetota</taxon>
        <taxon>Actinomycetes</taxon>
        <taxon>Mycobacteriales</taxon>
        <taxon>Mycobacteriaceae</taxon>
        <taxon>Mycobacterium</taxon>
        <taxon>Mycobacterium tuberculosis complex</taxon>
    </lineage>
</organism>
<accession>A1KMY6</accession>
<dbReference type="EC" id="6.1.1.17" evidence="1"/>
<dbReference type="EMBL" id="AM408590">
    <property type="protein sequence ID" value="CAL73002.1"/>
    <property type="molecule type" value="Genomic_DNA"/>
</dbReference>
<dbReference type="RefSeq" id="WP_011799308.1">
    <property type="nucleotide sequence ID" value="NC_008769.1"/>
</dbReference>
<dbReference type="SMR" id="A1KMY6"/>
<dbReference type="KEGG" id="mbb:BCG_3013c"/>
<dbReference type="HOGENOM" id="CLU_015768_6_1_11"/>
<dbReference type="Proteomes" id="UP000001472">
    <property type="component" value="Chromosome"/>
</dbReference>
<dbReference type="GO" id="GO:0005829">
    <property type="term" value="C:cytosol"/>
    <property type="evidence" value="ECO:0007669"/>
    <property type="project" value="TreeGrafter"/>
</dbReference>
<dbReference type="GO" id="GO:0005524">
    <property type="term" value="F:ATP binding"/>
    <property type="evidence" value="ECO:0007669"/>
    <property type="project" value="UniProtKB-UniRule"/>
</dbReference>
<dbReference type="GO" id="GO:0004818">
    <property type="term" value="F:glutamate-tRNA ligase activity"/>
    <property type="evidence" value="ECO:0007669"/>
    <property type="project" value="UniProtKB-UniRule"/>
</dbReference>
<dbReference type="GO" id="GO:0000049">
    <property type="term" value="F:tRNA binding"/>
    <property type="evidence" value="ECO:0007669"/>
    <property type="project" value="InterPro"/>
</dbReference>
<dbReference type="GO" id="GO:0008270">
    <property type="term" value="F:zinc ion binding"/>
    <property type="evidence" value="ECO:0007669"/>
    <property type="project" value="InterPro"/>
</dbReference>
<dbReference type="GO" id="GO:0006424">
    <property type="term" value="P:glutamyl-tRNA aminoacylation"/>
    <property type="evidence" value="ECO:0007669"/>
    <property type="project" value="UniProtKB-UniRule"/>
</dbReference>
<dbReference type="CDD" id="cd00808">
    <property type="entry name" value="GluRS_core"/>
    <property type="match status" value="1"/>
</dbReference>
<dbReference type="FunFam" id="3.40.50.620:FF:000149">
    <property type="entry name" value="Glutamate--tRNA ligase"/>
    <property type="match status" value="1"/>
</dbReference>
<dbReference type="FunFam" id="3.90.800.10:FF:000003">
    <property type="entry name" value="Glutamate--tRNA ligase"/>
    <property type="match status" value="1"/>
</dbReference>
<dbReference type="Gene3D" id="1.10.10.350">
    <property type="match status" value="1"/>
</dbReference>
<dbReference type="Gene3D" id="1.10.8.70">
    <property type="entry name" value="Glutamate-tRNA synthetase, class I, anticodon-binding domain 1"/>
    <property type="match status" value="1"/>
</dbReference>
<dbReference type="Gene3D" id="1.10.1160.10">
    <property type="entry name" value="Glutamyl-trna Synthetase, Domain 2"/>
    <property type="match status" value="1"/>
</dbReference>
<dbReference type="Gene3D" id="3.90.800.10">
    <property type="entry name" value="Glutamyl-tRNA Synthetase, Domain 3"/>
    <property type="match status" value="1"/>
</dbReference>
<dbReference type="Gene3D" id="3.40.50.620">
    <property type="entry name" value="HUPs"/>
    <property type="match status" value="1"/>
</dbReference>
<dbReference type="HAMAP" id="MF_00022">
    <property type="entry name" value="Glu_tRNA_synth_type1"/>
    <property type="match status" value="1"/>
</dbReference>
<dbReference type="InterPro" id="IPR045462">
    <property type="entry name" value="aa-tRNA-synth_I_cd-bd"/>
</dbReference>
<dbReference type="InterPro" id="IPR020751">
    <property type="entry name" value="aa-tRNA-synth_I_codon-bd_sub2"/>
</dbReference>
<dbReference type="InterPro" id="IPR008925">
    <property type="entry name" value="aa_tRNA-synth_I_cd-bd_sf"/>
</dbReference>
<dbReference type="InterPro" id="IPR004527">
    <property type="entry name" value="Glu-tRNA-ligase_bac/mito"/>
</dbReference>
<dbReference type="InterPro" id="IPR020752">
    <property type="entry name" value="Glu-tRNA-synth_I_codon-bd_sub1"/>
</dbReference>
<dbReference type="InterPro" id="IPR000924">
    <property type="entry name" value="Glu/Gln-tRNA-synth"/>
</dbReference>
<dbReference type="InterPro" id="IPR020058">
    <property type="entry name" value="Glu/Gln-tRNA-synth_Ib_cat-dom"/>
</dbReference>
<dbReference type="InterPro" id="IPR020061">
    <property type="entry name" value="Glu_tRNA_lig_a-bdl"/>
</dbReference>
<dbReference type="InterPro" id="IPR049940">
    <property type="entry name" value="GluQ/Sye"/>
</dbReference>
<dbReference type="InterPro" id="IPR033910">
    <property type="entry name" value="GluRS_core"/>
</dbReference>
<dbReference type="InterPro" id="IPR014729">
    <property type="entry name" value="Rossmann-like_a/b/a_fold"/>
</dbReference>
<dbReference type="NCBIfam" id="TIGR00464">
    <property type="entry name" value="gltX_bact"/>
    <property type="match status" value="1"/>
</dbReference>
<dbReference type="PANTHER" id="PTHR43311">
    <property type="entry name" value="GLUTAMATE--TRNA LIGASE"/>
    <property type="match status" value="1"/>
</dbReference>
<dbReference type="PANTHER" id="PTHR43311:SF2">
    <property type="entry name" value="GLUTAMATE--TRNA LIGASE, MITOCHONDRIAL-RELATED"/>
    <property type="match status" value="1"/>
</dbReference>
<dbReference type="Pfam" id="PF19269">
    <property type="entry name" value="Anticodon_2"/>
    <property type="match status" value="1"/>
</dbReference>
<dbReference type="Pfam" id="PF00749">
    <property type="entry name" value="tRNA-synt_1c"/>
    <property type="match status" value="1"/>
</dbReference>
<dbReference type="PRINTS" id="PR00987">
    <property type="entry name" value="TRNASYNTHGLU"/>
</dbReference>
<dbReference type="SUPFAM" id="SSF48163">
    <property type="entry name" value="An anticodon-binding domain of class I aminoacyl-tRNA synthetases"/>
    <property type="match status" value="1"/>
</dbReference>
<dbReference type="SUPFAM" id="SSF52374">
    <property type="entry name" value="Nucleotidylyl transferase"/>
    <property type="match status" value="1"/>
</dbReference>
<name>SYE_MYCBP</name>
<proteinExistence type="inferred from homology"/>
<keyword id="KW-0030">Aminoacyl-tRNA synthetase</keyword>
<keyword id="KW-0067">ATP-binding</keyword>
<keyword id="KW-0963">Cytoplasm</keyword>
<keyword id="KW-0436">Ligase</keyword>
<keyword id="KW-0547">Nucleotide-binding</keyword>
<keyword id="KW-0648">Protein biosynthesis</keyword>